<proteinExistence type="inferred from homology"/>
<protein>
    <recommendedName>
        <fullName>Serine protease SplB</fullName>
        <ecNumber>3.4.21.-</ecNumber>
    </recommendedName>
</protein>
<evidence type="ECO:0000250" key="1"/>
<evidence type="ECO:0000250" key="2">
    <source>
        <dbReference type="UniProtKB" id="Q2FXC3"/>
    </source>
</evidence>
<evidence type="ECO:0000305" key="3"/>
<name>SPLB_STAA9</name>
<comment type="function">
    <text evidence="1">Serine protease that cleaves specifically after the sequence Trp-Glu-Leu-Gln.</text>
</comment>
<comment type="subcellular location">
    <subcellularLocation>
        <location evidence="1">Secreted</location>
    </subcellularLocation>
</comment>
<comment type="similarity">
    <text evidence="3">Belongs to the peptidase S1B family.</text>
</comment>
<comment type="sequence caution" evidence="3">
    <conflict type="erroneous initiation">
        <sequence resource="EMBL-CDS" id="ABQ49650"/>
    </conflict>
</comment>
<sequence length="240" mass="26141">MNKNVVIKSLATLTILTSVTGIGTTLVEEVQQTAKAENNVTKIQDTNIFPYTGVVAFKSATGFVVGKNTILTNKHVSKNYKVGDRITAHPNSDKGNGGIYSIKKIINYPGKEDVSVIQVEERAIERGPKGFNFNDNVTPFKYAAGAKAGERIKVIGYPHPYKNKYVLYESTGPVMSVEGSSIVYSAHTESGNSGSPVLNSNNELVGIHFASDVKNDDNRNAYGVYFTPEIKKFIAENIDK</sequence>
<feature type="signal peptide" evidence="1">
    <location>
        <begin position="1"/>
        <end position="36"/>
    </location>
</feature>
<feature type="chain" id="PRO_0000359541" description="Serine protease SplB">
    <location>
        <begin position="37"/>
        <end position="240"/>
    </location>
</feature>
<feature type="active site" description="Charge relay system" evidence="2">
    <location>
        <position position="75"/>
    </location>
</feature>
<feature type="active site" description="Charge relay system" evidence="2">
    <location>
        <position position="113"/>
    </location>
</feature>
<feature type="active site" description="Charge relay system" evidence="2">
    <location>
        <position position="193"/>
    </location>
</feature>
<accession>A5ITX7</accession>
<reference key="1">
    <citation type="submission" date="2007-05" db="EMBL/GenBank/DDBJ databases">
        <title>Complete sequence of chromosome of Staphylococcus aureus subsp. aureus JH9.</title>
        <authorList>
            <consortium name="US DOE Joint Genome Institute"/>
            <person name="Copeland A."/>
            <person name="Lucas S."/>
            <person name="Lapidus A."/>
            <person name="Barry K."/>
            <person name="Detter J.C."/>
            <person name="Glavina del Rio T."/>
            <person name="Hammon N."/>
            <person name="Israni S."/>
            <person name="Pitluck S."/>
            <person name="Chain P."/>
            <person name="Malfatti S."/>
            <person name="Shin M."/>
            <person name="Vergez L."/>
            <person name="Schmutz J."/>
            <person name="Larimer F."/>
            <person name="Land M."/>
            <person name="Hauser L."/>
            <person name="Kyrpides N."/>
            <person name="Kim E."/>
            <person name="Tomasz A."/>
            <person name="Richardson P."/>
        </authorList>
    </citation>
    <scope>NUCLEOTIDE SEQUENCE [LARGE SCALE GENOMIC DNA]</scope>
    <source>
        <strain>JH9</strain>
    </source>
</reference>
<dbReference type="EC" id="3.4.21.-"/>
<dbReference type="EMBL" id="CP000703">
    <property type="protein sequence ID" value="ABQ49650.1"/>
    <property type="status" value="ALT_INIT"/>
    <property type="molecule type" value="Genomic_DNA"/>
</dbReference>
<dbReference type="RefSeq" id="WP_001039454.1">
    <property type="nucleotide sequence ID" value="NC_009487.1"/>
</dbReference>
<dbReference type="SMR" id="A5ITX7"/>
<dbReference type="MEROPS" id="S01.282"/>
<dbReference type="KEGG" id="saj:SaurJH9_1863"/>
<dbReference type="HOGENOM" id="CLU_073589_2_0_9"/>
<dbReference type="GO" id="GO:0005576">
    <property type="term" value="C:extracellular region"/>
    <property type="evidence" value="ECO:0007669"/>
    <property type="project" value="UniProtKB-SubCell"/>
</dbReference>
<dbReference type="GO" id="GO:0004252">
    <property type="term" value="F:serine-type endopeptidase activity"/>
    <property type="evidence" value="ECO:0007669"/>
    <property type="project" value="InterPro"/>
</dbReference>
<dbReference type="GO" id="GO:0006508">
    <property type="term" value="P:proteolysis"/>
    <property type="evidence" value="ECO:0007669"/>
    <property type="project" value="UniProtKB-KW"/>
</dbReference>
<dbReference type="Gene3D" id="2.40.10.10">
    <property type="entry name" value="Trypsin-like serine proteases"/>
    <property type="match status" value="2"/>
</dbReference>
<dbReference type="InterPro" id="IPR009003">
    <property type="entry name" value="Peptidase_S1_PA"/>
</dbReference>
<dbReference type="InterPro" id="IPR043504">
    <property type="entry name" value="Peptidase_S1_PA_chymotrypsin"/>
</dbReference>
<dbReference type="InterPro" id="IPR008256">
    <property type="entry name" value="Peptidase_S1B"/>
</dbReference>
<dbReference type="InterPro" id="IPR008353">
    <property type="entry name" value="Peptidase_S1B_tx"/>
</dbReference>
<dbReference type="InterPro" id="IPR001254">
    <property type="entry name" value="Trypsin_dom"/>
</dbReference>
<dbReference type="InterPro" id="IPR028301">
    <property type="entry name" value="V8_his_AS"/>
</dbReference>
<dbReference type="PANTHER" id="PTHR43019:SF23">
    <property type="entry name" value="PROTEASE DO-LIKE 5, CHLOROPLASTIC"/>
    <property type="match status" value="1"/>
</dbReference>
<dbReference type="PANTHER" id="PTHR43019">
    <property type="entry name" value="SERINE ENDOPROTEASE DEGS"/>
    <property type="match status" value="1"/>
</dbReference>
<dbReference type="Pfam" id="PF00089">
    <property type="entry name" value="Trypsin"/>
    <property type="match status" value="1"/>
</dbReference>
<dbReference type="PRINTS" id="PR01774">
    <property type="entry name" value="EXFOLTOXIN"/>
</dbReference>
<dbReference type="PRINTS" id="PR00839">
    <property type="entry name" value="V8PROTEASE"/>
</dbReference>
<dbReference type="SUPFAM" id="SSF50494">
    <property type="entry name" value="Trypsin-like serine proteases"/>
    <property type="match status" value="1"/>
</dbReference>
<dbReference type="PROSITE" id="PS00672">
    <property type="entry name" value="V8_HIS"/>
    <property type="match status" value="1"/>
</dbReference>
<keyword id="KW-0378">Hydrolase</keyword>
<keyword id="KW-0645">Protease</keyword>
<keyword id="KW-0964">Secreted</keyword>
<keyword id="KW-0720">Serine protease</keyword>
<keyword id="KW-0732">Signal</keyword>
<gene>
    <name type="primary">splB</name>
    <name type="ordered locus">SaurJH9_1863</name>
</gene>
<organism>
    <name type="scientific">Staphylococcus aureus (strain JH9)</name>
    <dbReference type="NCBI Taxonomy" id="359786"/>
    <lineage>
        <taxon>Bacteria</taxon>
        <taxon>Bacillati</taxon>
        <taxon>Bacillota</taxon>
        <taxon>Bacilli</taxon>
        <taxon>Bacillales</taxon>
        <taxon>Staphylococcaceae</taxon>
        <taxon>Staphylococcus</taxon>
    </lineage>
</organism>